<protein>
    <recommendedName>
        <fullName evidence="1">Beta-hexosaminidase</fullName>
        <ecNumber evidence="1">3.2.1.52</ecNumber>
    </recommendedName>
    <alternativeName>
        <fullName evidence="1">Beta-N-acetylhexosaminidase</fullName>
    </alternativeName>
    <alternativeName>
        <fullName evidence="1">N-acetyl-beta-glucosaminidase</fullName>
    </alternativeName>
</protein>
<keyword id="KW-0131">Cell cycle</keyword>
<keyword id="KW-0132">Cell division</keyword>
<keyword id="KW-0133">Cell shape</keyword>
<keyword id="KW-0961">Cell wall biogenesis/degradation</keyword>
<keyword id="KW-0963">Cytoplasm</keyword>
<keyword id="KW-0326">Glycosidase</keyword>
<keyword id="KW-0378">Hydrolase</keyword>
<keyword id="KW-0573">Peptidoglycan synthesis</keyword>
<proteinExistence type="inferred from homology"/>
<sequence length="341" mass="37602">MGPVMLDVEGYELDAEEREILAHPLVGGLILFTRNYHDPAQLRELVRQIRAASRNHLVVAVDQEGGRVQRFREGFTRLPAAQSFAALLGMEEGGKLAQEAGWLMASEMIAMDIDISFAPVLDVGHISAAIGERSYHADPQKALAIASRFIDGMHEAGMKTTGKHFPGHGAVTADSHKETPCDPRPQAEIRAKDMSVFSSLIRENKLDAIMPAHVIYSDVDPRPASGSPYWLKTVLRQELGFDGVIFSDDLSMEGAAIMGSYAERGQASLDAGCDMILVCNNRKGAVSVLDNLSPIKAERVTRLYHKGSFSRQELMDSARWKAISTRLNQLHERWQEEKAGH</sequence>
<evidence type="ECO:0000255" key="1">
    <source>
        <dbReference type="HAMAP-Rule" id="MF_00364"/>
    </source>
</evidence>
<reference key="1">
    <citation type="journal article" date="2006" name="Proc. Natl. Acad. Sci. U.S.A.">
        <title>Identification of genes subject to positive selection in uropathogenic strains of Escherichia coli: a comparative genomics approach.</title>
        <authorList>
            <person name="Chen S.L."/>
            <person name="Hung C.-S."/>
            <person name="Xu J."/>
            <person name="Reigstad C.S."/>
            <person name="Magrini V."/>
            <person name="Sabo A."/>
            <person name="Blasiar D."/>
            <person name="Bieri T."/>
            <person name="Meyer R.R."/>
            <person name="Ozersky P."/>
            <person name="Armstrong J.R."/>
            <person name="Fulton R.S."/>
            <person name="Latreille J.P."/>
            <person name="Spieth J."/>
            <person name="Hooton T.M."/>
            <person name="Mardis E.R."/>
            <person name="Hultgren S.J."/>
            <person name="Gordon J.I."/>
        </authorList>
    </citation>
    <scope>NUCLEOTIDE SEQUENCE [LARGE SCALE GENOMIC DNA]</scope>
    <source>
        <strain>UTI89 / UPEC</strain>
    </source>
</reference>
<comment type="function">
    <text evidence="1">Plays a role in peptidoglycan recycling by cleaving the terminal beta-1,4-linked N-acetylglucosamine (GlcNAc) from peptide-linked peptidoglycan fragments, giving rise to free GlcNAc, anhydro-N-acetylmuramic acid and anhydro-N-acetylmuramic acid-linked peptides.</text>
</comment>
<comment type="catalytic activity">
    <reaction evidence="1">
        <text>Hydrolysis of terminal non-reducing N-acetyl-D-hexosamine residues in N-acetyl-beta-D-hexosaminides.</text>
        <dbReference type="EC" id="3.2.1.52"/>
    </reaction>
</comment>
<comment type="pathway">
    <text evidence="1">Cell wall biogenesis; peptidoglycan recycling.</text>
</comment>
<comment type="subcellular location">
    <subcellularLocation>
        <location evidence="1">Cytoplasm</location>
    </subcellularLocation>
</comment>
<comment type="similarity">
    <text evidence="1">Belongs to the glycosyl hydrolase 3 family. NagZ subfamily.</text>
</comment>
<feature type="chain" id="PRO_1000005652" description="Beta-hexosaminidase">
    <location>
        <begin position="1"/>
        <end position="341"/>
    </location>
</feature>
<feature type="active site" description="Proton donor/acceptor" evidence="1">
    <location>
        <position position="176"/>
    </location>
</feature>
<feature type="active site" description="Nucleophile" evidence="1">
    <location>
        <position position="248"/>
    </location>
</feature>
<feature type="binding site" evidence="1">
    <location>
        <position position="62"/>
    </location>
    <ligand>
        <name>substrate</name>
    </ligand>
</feature>
<feature type="binding site" evidence="1">
    <location>
        <position position="70"/>
    </location>
    <ligand>
        <name>substrate</name>
    </ligand>
</feature>
<feature type="binding site" evidence="1">
    <location>
        <position position="133"/>
    </location>
    <ligand>
        <name>substrate</name>
    </ligand>
</feature>
<feature type="binding site" evidence="1">
    <location>
        <begin position="163"/>
        <end position="164"/>
    </location>
    <ligand>
        <name>substrate</name>
    </ligand>
</feature>
<feature type="site" description="Important for catalytic activity" evidence="1">
    <location>
        <position position="174"/>
    </location>
</feature>
<organism>
    <name type="scientific">Escherichia coli (strain UTI89 / UPEC)</name>
    <dbReference type="NCBI Taxonomy" id="364106"/>
    <lineage>
        <taxon>Bacteria</taxon>
        <taxon>Pseudomonadati</taxon>
        <taxon>Pseudomonadota</taxon>
        <taxon>Gammaproteobacteria</taxon>
        <taxon>Enterobacterales</taxon>
        <taxon>Enterobacteriaceae</taxon>
        <taxon>Escherichia</taxon>
    </lineage>
</organism>
<gene>
    <name evidence="1" type="primary">nagZ</name>
    <name type="ordered locus">UTI89_C1235</name>
</gene>
<accession>Q1RD47</accession>
<dbReference type="EC" id="3.2.1.52" evidence="1"/>
<dbReference type="EMBL" id="CP000243">
    <property type="protein sequence ID" value="ABE06717.1"/>
    <property type="molecule type" value="Genomic_DNA"/>
</dbReference>
<dbReference type="RefSeq" id="WP_000529300.1">
    <property type="nucleotide sequence ID" value="NZ_CP064825.1"/>
</dbReference>
<dbReference type="SMR" id="Q1RD47"/>
<dbReference type="CAZy" id="GH3">
    <property type="family name" value="Glycoside Hydrolase Family 3"/>
</dbReference>
<dbReference type="KEGG" id="eci:UTI89_C1235"/>
<dbReference type="HOGENOM" id="CLU_008392_0_0_6"/>
<dbReference type="UniPathway" id="UPA00544"/>
<dbReference type="Proteomes" id="UP000001952">
    <property type="component" value="Chromosome"/>
</dbReference>
<dbReference type="GO" id="GO:0005737">
    <property type="term" value="C:cytoplasm"/>
    <property type="evidence" value="ECO:0007669"/>
    <property type="project" value="UniProtKB-SubCell"/>
</dbReference>
<dbReference type="GO" id="GO:0004563">
    <property type="term" value="F:beta-N-acetylhexosaminidase activity"/>
    <property type="evidence" value="ECO:0007669"/>
    <property type="project" value="UniProtKB-UniRule"/>
</dbReference>
<dbReference type="GO" id="GO:0005975">
    <property type="term" value="P:carbohydrate metabolic process"/>
    <property type="evidence" value="ECO:0007669"/>
    <property type="project" value="InterPro"/>
</dbReference>
<dbReference type="GO" id="GO:0051301">
    <property type="term" value="P:cell division"/>
    <property type="evidence" value="ECO:0007669"/>
    <property type="project" value="UniProtKB-KW"/>
</dbReference>
<dbReference type="GO" id="GO:0071555">
    <property type="term" value="P:cell wall organization"/>
    <property type="evidence" value="ECO:0007669"/>
    <property type="project" value="UniProtKB-KW"/>
</dbReference>
<dbReference type="GO" id="GO:0009252">
    <property type="term" value="P:peptidoglycan biosynthetic process"/>
    <property type="evidence" value="ECO:0007669"/>
    <property type="project" value="UniProtKB-KW"/>
</dbReference>
<dbReference type="GO" id="GO:0009254">
    <property type="term" value="P:peptidoglycan turnover"/>
    <property type="evidence" value="ECO:0007669"/>
    <property type="project" value="UniProtKB-UniRule"/>
</dbReference>
<dbReference type="GO" id="GO:0008360">
    <property type="term" value="P:regulation of cell shape"/>
    <property type="evidence" value="ECO:0007669"/>
    <property type="project" value="UniProtKB-KW"/>
</dbReference>
<dbReference type="FunFam" id="3.20.20.300:FF:000001">
    <property type="entry name" value="Beta-hexosaminidase"/>
    <property type="match status" value="1"/>
</dbReference>
<dbReference type="Gene3D" id="3.20.20.300">
    <property type="entry name" value="Glycoside hydrolase, family 3, N-terminal domain"/>
    <property type="match status" value="1"/>
</dbReference>
<dbReference type="HAMAP" id="MF_00364">
    <property type="entry name" value="NagZ"/>
    <property type="match status" value="1"/>
</dbReference>
<dbReference type="InterPro" id="IPR022956">
    <property type="entry name" value="Beta_hexosaminidase_bac"/>
</dbReference>
<dbReference type="InterPro" id="IPR019800">
    <property type="entry name" value="Glyco_hydro_3_AS"/>
</dbReference>
<dbReference type="InterPro" id="IPR001764">
    <property type="entry name" value="Glyco_hydro_3_N"/>
</dbReference>
<dbReference type="InterPro" id="IPR036962">
    <property type="entry name" value="Glyco_hydro_3_N_sf"/>
</dbReference>
<dbReference type="InterPro" id="IPR017853">
    <property type="entry name" value="Glycoside_hydrolase_SF"/>
</dbReference>
<dbReference type="InterPro" id="IPR050226">
    <property type="entry name" value="NagZ_Beta-hexosaminidase"/>
</dbReference>
<dbReference type="NCBIfam" id="NF003740">
    <property type="entry name" value="PRK05337.1"/>
    <property type="match status" value="1"/>
</dbReference>
<dbReference type="PANTHER" id="PTHR30480:SF13">
    <property type="entry name" value="BETA-HEXOSAMINIDASE"/>
    <property type="match status" value="1"/>
</dbReference>
<dbReference type="PANTHER" id="PTHR30480">
    <property type="entry name" value="BETA-HEXOSAMINIDASE-RELATED"/>
    <property type="match status" value="1"/>
</dbReference>
<dbReference type="Pfam" id="PF00933">
    <property type="entry name" value="Glyco_hydro_3"/>
    <property type="match status" value="1"/>
</dbReference>
<dbReference type="SUPFAM" id="SSF51445">
    <property type="entry name" value="(Trans)glycosidases"/>
    <property type="match status" value="1"/>
</dbReference>
<dbReference type="PROSITE" id="PS00775">
    <property type="entry name" value="GLYCOSYL_HYDROL_F3"/>
    <property type="match status" value="1"/>
</dbReference>
<name>NAGZ_ECOUT</name>